<accession>C4LDD0</accession>
<sequence>MSKTFFVTGTDTDAGKTTCTLALLQAAAAKGLKAVAYKPVAAGCEMIENKPCNQDVLLLQKHSALPLQYEQVVAYSFDAFSSPHIAAEESGVTIKLDVLSEGLSRLKKSTGADIIFVEGAGGWRVPIGNGHFLSDWVKYENMPVIMVVGARLGCINHSVLTYEAIHHDMLPLVGWCMNRITPSMNHYQQNLETLKSLLPAPFMGEIPYINKPDEQDLGKYLDISTLL</sequence>
<name>BIOD_TOLAT</name>
<feature type="chain" id="PRO_1000205214" description="ATP-dependent dethiobiotin synthetase BioD">
    <location>
        <begin position="1"/>
        <end position="227"/>
    </location>
</feature>
<feature type="active site" evidence="1">
    <location>
        <position position="38"/>
    </location>
</feature>
<feature type="binding site" evidence="1">
    <location>
        <begin position="13"/>
        <end position="18"/>
    </location>
    <ligand>
        <name>ATP</name>
        <dbReference type="ChEBI" id="CHEBI:30616"/>
    </ligand>
</feature>
<feature type="binding site" evidence="1">
    <location>
        <position position="17"/>
    </location>
    <ligand>
        <name>Mg(2+)</name>
        <dbReference type="ChEBI" id="CHEBI:18420"/>
    </ligand>
</feature>
<feature type="binding site" evidence="1">
    <location>
        <position position="55"/>
    </location>
    <ligand>
        <name>ATP</name>
        <dbReference type="ChEBI" id="CHEBI:30616"/>
    </ligand>
</feature>
<feature type="binding site" evidence="1">
    <location>
        <position position="55"/>
    </location>
    <ligand>
        <name>Mg(2+)</name>
        <dbReference type="ChEBI" id="CHEBI:18420"/>
    </ligand>
</feature>
<feature type="binding site" evidence="1">
    <location>
        <begin position="118"/>
        <end position="121"/>
    </location>
    <ligand>
        <name>ATP</name>
        <dbReference type="ChEBI" id="CHEBI:30616"/>
    </ligand>
</feature>
<feature type="binding site" evidence="1">
    <location>
        <position position="118"/>
    </location>
    <ligand>
        <name>Mg(2+)</name>
        <dbReference type="ChEBI" id="CHEBI:18420"/>
    </ligand>
</feature>
<feature type="binding site" evidence="1">
    <location>
        <begin position="178"/>
        <end position="179"/>
    </location>
    <ligand>
        <name>ATP</name>
        <dbReference type="ChEBI" id="CHEBI:30616"/>
    </ligand>
</feature>
<feature type="binding site" evidence="1">
    <location>
        <begin position="207"/>
        <end position="209"/>
    </location>
    <ligand>
        <name>ATP</name>
        <dbReference type="ChEBI" id="CHEBI:30616"/>
    </ligand>
</feature>
<feature type="binding site" evidence="1">
    <location>
        <position position="214"/>
    </location>
    <ligand>
        <name>ATP</name>
        <dbReference type="ChEBI" id="CHEBI:30616"/>
    </ligand>
</feature>
<reference key="1">
    <citation type="submission" date="2009-05" db="EMBL/GenBank/DDBJ databases">
        <title>Complete sequence of Tolumonas auensis DSM 9187.</title>
        <authorList>
            <consortium name="US DOE Joint Genome Institute"/>
            <person name="Lucas S."/>
            <person name="Copeland A."/>
            <person name="Lapidus A."/>
            <person name="Glavina del Rio T."/>
            <person name="Tice H."/>
            <person name="Bruce D."/>
            <person name="Goodwin L."/>
            <person name="Pitluck S."/>
            <person name="Chertkov O."/>
            <person name="Brettin T."/>
            <person name="Detter J.C."/>
            <person name="Han C."/>
            <person name="Larimer F."/>
            <person name="Land M."/>
            <person name="Hauser L."/>
            <person name="Kyrpides N."/>
            <person name="Mikhailova N."/>
            <person name="Spring S."/>
            <person name="Beller H."/>
        </authorList>
    </citation>
    <scope>NUCLEOTIDE SEQUENCE [LARGE SCALE GENOMIC DNA]</scope>
    <source>
        <strain>DSM 9187 / NBRC 110442 / TA 4</strain>
    </source>
</reference>
<keyword id="KW-0067">ATP-binding</keyword>
<keyword id="KW-0093">Biotin biosynthesis</keyword>
<keyword id="KW-0963">Cytoplasm</keyword>
<keyword id="KW-0436">Ligase</keyword>
<keyword id="KW-0460">Magnesium</keyword>
<keyword id="KW-0479">Metal-binding</keyword>
<keyword id="KW-0547">Nucleotide-binding</keyword>
<keyword id="KW-1185">Reference proteome</keyword>
<protein>
    <recommendedName>
        <fullName evidence="1">ATP-dependent dethiobiotin synthetase BioD</fullName>
        <ecNumber evidence="1">6.3.3.3</ecNumber>
    </recommendedName>
    <alternativeName>
        <fullName evidence="1">DTB synthetase</fullName>
        <shortName evidence="1">DTBS</shortName>
    </alternativeName>
    <alternativeName>
        <fullName evidence="1">Dethiobiotin synthase</fullName>
    </alternativeName>
</protein>
<comment type="function">
    <text evidence="1">Catalyzes a mechanistically unusual reaction, the ATP-dependent insertion of CO2 between the N7 and N8 nitrogen atoms of 7,8-diaminopelargonic acid (DAPA, also called 7,8-diammoniononanoate) to form a ureido ring.</text>
</comment>
<comment type="catalytic activity">
    <reaction evidence="1">
        <text>(7R,8S)-7,8-diammoniononanoate + CO2 + ATP = (4R,5S)-dethiobiotin + ADP + phosphate + 3 H(+)</text>
        <dbReference type="Rhea" id="RHEA:15805"/>
        <dbReference type="ChEBI" id="CHEBI:15378"/>
        <dbReference type="ChEBI" id="CHEBI:16526"/>
        <dbReference type="ChEBI" id="CHEBI:30616"/>
        <dbReference type="ChEBI" id="CHEBI:43474"/>
        <dbReference type="ChEBI" id="CHEBI:149469"/>
        <dbReference type="ChEBI" id="CHEBI:149473"/>
        <dbReference type="ChEBI" id="CHEBI:456216"/>
        <dbReference type="EC" id="6.3.3.3"/>
    </reaction>
</comment>
<comment type="cofactor">
    <cofactor evidence="1">
        <name>Mg(2+)</name>
        <dbReference type="ChEBI" id="CHEBI:18420"/>
    </cofactor>
</comment>
<comment type="pathway">
    <text evidence="1">Cofactor biosynthesis; biotin biosynthesis; biotin from 7,8-diaminononanoate: step 1/2.</text>
</comment>
<comment type="subunit">
    <text evidence="1">Homodimer.</text>
</comment>
<comment type="subcellular location">
    <subcellularLocation>
        <location evidence="1">Cytoplasm</location>
    </subcellularLocation>
</comment>
<comment type="similarity">
    <text evidence="1">Belongs to the dethiobiotin synthetase family.</text>
</comment>
<dbReference type="EC" id="6.3.3.3" evidence="1"/>
<dbReference type="EMBL" id="CP001616">
    <property type="protein sequence ID" value="ACQ92726.1"/>
    <property type="molecule type" value="Genomic_DNA"/>
</dbReference>
<dbReference type="RefSeq" id="WP_012729325.1">
    <property type="nucleotide sequence ID" value="NC_012691.1"/>
</dbReference>
<dbReference type="SMR" id="C4LDD0"/>
<dbReference type="STRING" id="595494.Tola_1100"/>
<dbReference type="KEGG" id="tau:Tola_1100"/>
<dbReference type="eggNOG" id="COG0132">
    <property type="taxonomic scope" value="Bacteria"/>
</dbReference>
<dbReference type="HOGENOM" id="CLU_072551_0_0_6"/>
<dbReference type="OrthoDB" id="9802097at2"/>
<dbReference type="UniPathway" id="UPA00078">
    <property type="reaction ID" value="UER00161"/>
</dbReference>
<dbReference type="Proteomes" id="UP000009073">
    <property type="component" value="Chromosome"/>
</dbReference>
<dbReference type="GO" id="GO:0005829">
    <property type="term" value="C:cytosol"/>
    <property type="evidence" value="ECO:0007669"/>
    <property type="project" value="TreeGrafter"/>
</dbReference>
<dbReference type="GO" id="GO:0005524">
    <property type="term" value="F:ATP binding"/>
    <property type="evidence" value="ECO:0007669"/>
    <property type="project" value="UniProtKB-UniRule"/>
</dbReference>
<dbReference type="GO" id="GO:0004141">
    <property type="term" value="F:dethiobiotin synthase activity"/>
    <property type="evidence" value="ECO:0007669"/>
    <property type="project" value="UniProtKB-UniRule"/>
</dbReference>
<dbReference type="GO" id="GO:0000287">
    <property type="term" value="F:magnesium ion binding"/>
    <property type="evidence" value="ECO:0007669"/>
    <property type="project" value="UniProtKB-UniRule"/>
</dbReference>
<dbReference type="GO" id="GO:0009102">
    <property type="term" value="P:biotin biosynthetic process"/>
    <property type="evidence" value="ECO:0007669"/>
    <property type="project" value="UniProtKB-UniRule"/>
</dbReference>
<dbReference type="CDD" id="cd03109">
    <property type="entry name" value="DTBS"/>
    <property type="match status" value="1"/>
</dbReference>
<dbReference type="FunFam" id="3.40.50.300:FF:000292">
    <property type="entry name" value="ATP-dependent dethiobiotin synthetase BioD"/>
    <property type="match status" value="1"/>
</dbReference>
<dbReference type="Gene3D" id="3.40.50.300">
    <property type="entry name" value="P-loop containing nucleotide triphosphate hydrolases"/>
    <property type="match status" value="1"/>
</dbReference>
<dbReference type="HAMAP" id="MF_00336">
    <property type="entry name" value="BioD"/>
    <property type="match status" value="1"/>
</dbReference>
<dbReference type="InterPro" id="IPR004472">
    <property type="entry name" value="DTB_synth_BioD"/>
</dbReference>
<dbReference type="InterPro" id="IPR027417">
    <property type="entry name" value="P-loop_NTPase"/>
</dbReference>
<dbReference type="NCBIfam" id="TIGR00347">
    <property type="entry name" value="bioD"/>
    <property type="match status" value="1"/>
</dbReference>
<dbReference type="PANTHER" id="PTHR43210">
    <property type="entry name" value="DETHIOBIOTIN SYNTHETASE"/>
    <property type="match status" value="1"/>
</dbReference>
<dbReference type="PANTHER" id="PTHR43210:SF5">
    <property type="entry name" value="DETHIOBIOTIN SYNTHETASE"/>
    <property type="match status" value="1"/>
</dbReference>
<dbReference type="Pfam" id="PF13500">
    <property type="entry name" value="AAA_26"/>
    <property type="match status" value="1"/>
</dbReference>
<dbReference type="PIRSF" id="PIRSF006755">
    <property type="entry name" value="DTB_synth"/>
    <property type="match status" value="1"/>
</dbReference>
<dbReference type="SUPFAM" id="SSF52540">
    <property type="entry name" value="P-loop containing nucleoside triphosphate hydrolases"/>
    <property type="match status" value="1"/>
</dbReference>
<gene>
    <name evidence="1" type="primary">bioD</name>
    <name type="ordered locus">Tola_1100</name>
</gene>
<proteinExistence type="inferred from homology"/>
<evidence type="ECO:0000255" key="1">
    <source>
        <dbReference type="HAMAP-Rule" id="MF_00336"/>
    </source>
</evidence>
<organism>
    <name type="scientific">Tolumonas auensis (strain DSM 9187 / NBRC 110442 / TA 4)</name>
    <dbReference type="NCBI Taxonomy" id="595494"/>
    <lineage>
        <taxon>Bacteria</taxon>
        <taxon>Pseudomonadati</taxon>
        <taxon>Pseudomonadota</taxon>
        <taxon>Gammaproteobacteria</taxon>
        <taxon>Aeromonadales</taxon>
        <taxon>Aeromonadaceae</taxon>
        <taxon>Tolumonas</taxon>
    </lineage>
</organism>